<gene>
    <name evidence="2" type="primary">Galnt17</name>
    <name evidence="6 8" type="synonym">Wbscr17</name>
</gene>
<dbReference type="EC" id="2.4.1.41" evidence="3"/>
<dbReference type="EMBL" id="AF467979">
    <property type="protein sequence ID" value="AAM62404.1"/>
    <property type="molecule type" value="mRNA"/>
</dbReference>
<dbReference type="EMBL" id="AK035817">
    <property type="protein sequence ID" value="BAC29197.1"/>
    <property type="molecule type" value="mRNA"/>
</dbReference>
<dbReference type="EMBL" id="AK048758">
    <property type="protein sequence ID" value="BAC33446.2"/>
    <property type="molecule type" value="mRNA"/>
</dbReference>
<dbReference type="EMBL" id="AK051281">
    <property type="protein sequence ID" value="BAC34591.2"/>
    <property type="molecule type" value="mRNA"/>
</dbReference>
<dbReference type="EMBL" id="BC052469">
    <property type="protein sequence ID" value="AAH52469.1"/>
    <property type="molecule type" value="mRNA"/>
</dbReference>
<dbReference type="CCDS" id="CCDS39296.1">
    <molecule id="Q7TT15-1"/>
</dbReference>
<dbReference type="RefSeq" id="NP_660253.2">
    <molecule id="Q7TT15-1"/>
    <property type="nucleotide sequence ID" value="NM_145218.3"/>
</dbReference>
<dbReference type="SMR" id="Q7TT15"/>
<dbReference type="FunCoup" id="Q7TT15">
    <property type="interactions" value="290"/>
</dbReference>
<dbReference type="STRING" id="10090.ENSMUSP00000083187"/>
<dbReference type="CAZy" id="CBM13">
    <property type="family name" value="Carbohydrate-Binding Module Family 13"/>
</dbReference>
<dbReference type="CAZy" id="GT27">
    <property type="family name" value="Glycosyltransferase Family 27"/>
</dbReference>
<dbReference type="GlyConnect" id="2662">
    <property type="glycosylation" value="1 N-Linked glycan (1 site)"/>
</dbReference>
<dbReference type="GlyCosmos" id="Q7TT15">
    <property type="glycosylation" value="3 sites, 1 glycan"/>
</dbReference>
<dbReference type="GlyGen" id="Q7TT15">
    <property type="glycosylation" value="4 sites, 2 N-linked glycans (3 sites)"/>
</dbReference>
<dbReference type="iPTMnet" id="Q7TT15"/>
<dbReference type="PhosphoSitePlus" id="Q7TT15"/>
<dbReference type="PaxDb" id="10090-ENSMUSP00000083187"/>
<dbReference type="ProteomicsDB" id="271232">
    <molecule id="Q7TT15-1"/>
</dbReference>
<dbReference type="ProteomicsDB" id="271233">
    <molecule id="Q7TT15-2"/>
</dbReference>
<dbReference type="Pumba" id="Q7TT15"/>
<dbReference type="Antibodypedia" id="2698">
    <property type="antibodies" value="105 antibodies from 19 providers"/>
</dbReference>
<dbReference type="DNASU" id="212996"/>
<dbReference type="Ensembl" id="ENSMUST00000086023.13">
    <molecule id="Q7TT15-1"/>
    <property type="protein sequence ID" value="ENSMUSP00000083187.6"/>
    <property type="gene ID" value="ENSMUSG00000034040.18"/>
</dbReference>
<dbReference type="GeneID" id="212996"/>
<dbReference type="KEGG" id="mmu:212996"/>
<dbReference type="UCSC" id="uc008zuq.1">
    <molecule id="Q7TT15-1"/>
    <property type="organism name" value="mouse"/>
</dbReference>
<dbReference type="AGR" id="MGI:2137594"/>
<dbReference type="CTD" id="64409"/>
<dbReference type="MGI" id="MGI:2137594">
    <property type="gene designation" value="Galnt17"/>
</dbReference>
<dbReference type="VEuPathDB" id="HostDB:ENSMUSG00000034040"/>
<dbReference type="eggNOG" id="KOG3736">
    <property type="taxonomic scope" value="Eukaryota"/>
</dbReference>
<dbReference type="GeneTree" id="ENSGT00940000156014"/>
<dbReference type="HOGENOM" id="CLU_013477_4_0_1"/>
<dbReference type="InParanoid" id="Q7TT15"/>
<dbReference type="OMA" id="EENDAKY"/>
<dbReference type="OrthoDB" id="9924649at2759"/>
<dbReference type="PhylomeDB" id="Q7TT15"/>
<dbReference type="TreeFam" id="TF313267"/>
<dbReference type="Reactome" id="R-MMU-913709">
    <property type="pathway name" value="O-linked glycosylation of mucins"/>
</dbReference>
<dbReference type="UniPathway" id="UPA00378"/>
<dbReference type="BioGRID-ORCS" id="212996">
    <property type="hits" value="1 hit in 78 CRISPR screens"/>
</dbReference>
<dbReference type="CD-CODE" id="CE726F99">
    <property type="entry name" value="Postsynaptic density"/>
</dbReference>
<dbReference type="ChiTaRS" id="Galntl6">
    <property type="organism name" value="mouse"/>
</dbReference>
<dbReference type="PRO" id="PR:Q7TT15"/>
<dbReference type="Proteomes" id="UP000000589">
    <property type="component" value="Chromosome 5"/>
</dbReference>
<dbReference type="RNAct" id="Q7TT15">
    <property type="molecule type" value="protein"/>
</dbReference>
<dbReference type="Bgee" id="ENSMUSG00000034040">
    <property type="expression patterns" value="Expressed in trigeminal ganglion and 119 other cell types or tissues"/>
</dbReference>
<dbReference type="ExpressionAtlas" id="Q7TT15">
    <property type="expression patterns" value="baseline and differential"/>
</dbReference>
<dbReference type="GO" id="GO:0000139">
    <property type="term" value="C:Golgi membrane"/>
    <property type="evidence" value="ECO:0007669"/>
    <property type="project" value="UniProtKB-SubCell"/>
</dbReference>
<dbReference type="GO" id="GO:0030246">
    <property type="term" value="F:carbohydrate binding"/>
    <property type="evidence" value="ECO:0007669"/>
    <property type="project" value="UniProtKB-KW"/>
</dbReference>
<dbReference type="GO" id="GO:0046872">
    <property type="term" value="F:metal ion binding"/>
    <property type="evidence" value="ECO:0007669"/>
    <property type="project" value="UniProtKB-KW"/>
</dbReference>
<dbReference type="GO" id="GO:0004653">
    <property type="term" value="F:polypeptide N-acetylgalactosaminyltransferase activity"/>
    <property type="evidence" value="ECO:0007669"/>
    <property type="project" value="UniProtKB-EC"/>
</dbReference>
<dbReference type="GO" id="GO:0006486">
    <property type="term" value="P:protein glycosylation"/>
    <property type="evidence" value="ECO:0007669"/>
    <property type="project" value="UniProtKB-UniPathway"/>
</dbReference>
<dbReference type="CDD" id="cd23474">
    <property type="entry name" value="beta-trefoil_Ricin_GALNT17"/>
    <property type="match status" value="1"/>
</dbReference>
<dbReference type="CDD" id="cd02510">
    <property type="entry name" value="pp-GalNAc-T"/>
    <property type="match status" value="1"/>
</dbReference>
<dbReference type="FunFam" id="2.80.10.50:FF:000017">
    <property type="entry name" value="Polypeptide N-acetylgalactosaminyltransferase"/>
    <property type="match status" value="1"/>
</dbReference>
<dbReference type="FunFam" id="3.90.550.10:FF:000192">
    <property type="entry name" value="Polypeptide N-acetylgalactosaminyltransferase 9"/>
    <property type="match status" value="1"/>
</dbReference>
<dbReference type="FunFam" id="3.90.550.10:FF:000203">
    <property type="entry name" value="Polypeptide N-acetylgalactosaminyltransferase 9"/>
    <property type="match status" value="1"/>
</dbReference>
<dbReference type="Gene3D" id="2.80.10.50">
    <property type="match status" value="1"/>
</dbReference>
<dbReference type="Gene3D" id="3.90.550.10">
    <property type="entry name" value="Spore Coat Polysaccharide Biosynthesis Protein SpsA, Chain A"/>
    <property type="match status" value="1"/>
</dbReference>
<dbReference type="InterPro" id="IPR045885">
    <property type="entry name" value="GalNAc-T"/>
</dbReference>
<dbReference type="InterPro" id="IPR001173">
    <property type="entry name" value="Glyco_trans_2-like"/>
</dbReference>
<dbReference type="InterPro" id="IPR029044">
    <property type="entry name" value="Nucleotide-diphossugar_trans"/>
</dbReference>
<dbReference type="InterPro" id="IPR035992">
    <property type="entry name" value="Ricin_B-like_lectins"/>
</dbReference>
<dbReference type="InterPro" id="IPR000772">
    <property type="entry name" value="Ricin_B_lectin"/>
</dbReference>
<dbReference type="PANTHER" id="PTHR11675">
    <property type="entry name" value="N-ACETYLGALACTOSAMINYLTRANSFERASE"/>
    <property type="match status" value="1"/>
</dbReference>
<dbReference type="PANTHER" id="PTHR11675:SF38">
    <property type="entry name" value="POLYPEPTIDE N-ACETYLGALACTOSAMINYLTRANSFERASE 17"/>
    <property type="match status" value="1"/>
</dbReference>
<dbReference type="Pfam" id="PF00535">
    <property type="entry name" value="Glycos_transf_2"/>
    <property type="match status" value="1"/>
</dbReference>
<dbReference type="Pfam" id="PF00652">
    <property type="entry name" value="Ricin_B_lectin"/>
    <property type="match status" value="1"/>
</dbReference>
<dbReference type="SUPFAM" id="SSF53448">
    <property type="entry name" value="Nucleotide-diphospho-sugar transferases"/>
    <property type="match status" value="1"/>
</dbReference>
<dbReference type="SUPFAM" id="SSF50370">
    <property type="entry name" value="Ricin B-like lectins"/>
    <property type="match status" value="1"/>
</dbReference>
<dbReference type="PROSITE" id="PS50231">
    <property type="entry name" value="RICIN_B_LECTIN"/>
    <property type="match status" value="1"/>
</dbReference>
<name>GLT17_MOUSE</name>
<keyword id="KW-0025">Alternative splicing</keyword>
<keyword id="KW-0903">Direct protein sequencing</keyword>
<keyword id="KW-1015">Disulfide bond</keyword>
<keyword id="KW-0325">Glycoprotein</keyword>
<keyword id="KW-0328">Glycosyltransferase</keyword>
<keyword id="KW-0333">Golgi apparatus</keyword>
<keyword id="KW-0430">Lectin</keyword>
<keyword id="KW-0464">Manganese</keyword>
<keyword id="KW-0472">Membrane</keyword>
<keyword id="KW-0479">Metal-binding</keyword>
<keyword id="KW-1185">Reference proteome</keyword>
<keyword id="KW-0735">Signal-anchor</keyword>
<keyword id="KW-0808">Transferase</keyword>
<keyword id="KW-0812">Transmembrane</keyword>
<keyword id="KW-1133">Transmembrane helix</keyword>
<evidence type="ECO:0000250" key="1"/>
<evidence type="ECO:0000250" key="2">
    <source>
        <dbReference type="UniProtKB" id="Q6IS24"/>
    </source>
</evidence>
<evidence type="ECO:0000250" key="3">
    <source>
        <dbReference type="UniProtKB" id="Q9HCQ5"/>
    </source>
</evidence>
<evidence type="ECO:0000255" key="4"/>
<evidence type="ECO:0000255" key="5">
    <source>
        <dbReference type="PROSITE-ProRule" id="PRU00174"/>
    </source>
</evidence>
<evidence type="ECO:0000303" key="6">
    <source>
    </source>
</evidence>
<evidence type="ECO:0000305" key="7"/>
<evidence type="ECO:0000312" key="8">
    <source>
        <dbReference type="MGI" id="MGI:2137594"/>
    </source>
</evidence>
<accession>Q7TT15</accession>
<accession>Q8BKN7</accession>
<accession>Q8BUY1</accession>
<accession>Q8BX73</accession>
<accession>Q8BZC8</accession>
<accession>Q8K483</accession>
<protein>
    <recommendedName>
        <fullName evidence="7">Polypeptide N-acetylgalactosaminyltransferase 17</fullName>
        <ecNumber evidence="3">2.4.1.41</ecNumber>
    </recommendedName>
    <alternativeName>
        <fullName>Polypeptide GalNAc transferase-like protein 3</fullName>
        <shortName>GalNAc-T-like protein 3</shortName>
        <shortName>pp-GaNTase-like protein 3</shortName>
    </alternativeName>
    <alternativeName>
        <fullName>Protein-UDP acetylgalactosaminyltransferase-like protein 3</fullName>
    </alternativeName>
    <alternativeName>
        <fullName>UDP-GalNAc:polypeptide N-acetylgalactosaminyltransferase-like protein 3</fullName>
    </alternativeName>
    <alternativeName>
        <fullName evidence="8">Williams-Beuren syndrome chromosomal region 17 protein homolog</fullName>
    </alternativeName>
</protein>
<sequence length="598" mass="67691">MASLRRVKVLLVLNLIAVAGFVIFLAKCRPIAVRSGDAFHEIRPRAEVANLSAHSASPIQDAVLKRLSLLEDIVYRQLNGLSKSLGLIEGYGGRGKGGLPATLSPSEEEKAKGPHEKYGYNSYLSEKISLDRSIPDYRPTKCKELKYSKELPQISIIFIFVNEALSVILRSVHSAVNHTPTHLLKEIILVDDNSDEEELKAPLEEYVHKRYPGLVKVVRNQKREGLIRARIEGWKAATGQVTGFFDAHVEFTAGWAEPVLSRIQENRKRVILPSIDNIKQDNFEVQRYENSAHGYSWELWCMYISPPKDWWDAGDPSLPIRTPAMIGCSFVVNRKFFGEIGLLDPGMDVYGGENIELGIKVWLCGGSMEVLPCSRVAHIERKKKPYNSNIGFYTKRNALRVAEVWMDDYKSHVYIAWNLPLENPGIDIGDVSERKALRKSLKCKNFQWYLDHVYPEMRRYNNTIAYGELRNNKAKDVCLDQGPLENHTAILYPCHGWGPQLARYTKEGFLHLGALGTTTLLPDTRCLVDNSKSRLPQLLDCDKVKSSLYKRWNFIQNGAIMNKGTGRCLEVENRGLAGIDLILRSCTGQRWAIKNPIK</sequence>
<proteinExistence type="evidence at protein level"/>
<reference key="1">
    <citation type="journal article" date="2002" name="Hum. Genet.">
        <title>Identification of additional transcripts in the Williams-Beuren syndrome critical region.</title>
        <authorList>
            <person name="Merla G."/>
            <person name="Ucla C."/>
            <person name="Guipponi M."/>
            <person name="Reymond A."/>
        </authorList>
    </citation>
    <scope>NUCLEOTIDE SEQUENCE [MRNA] (ISOFORM 2)</scope>
</reference>
<reference key="2">
    <citation type="journal article" date="2004" name="Genome Res.">
        <title>The status, quality, and expansion of the NIH full-length cDNA project: the Mammalian Gene Collection (MGC).</title>
        <authorList>
            <consortium name="The MGC Project Team"/>
        </authorList>
    </citation>
    <scope>NUCLEOTIDE SEQUENCE [LARGE SCALE MRNA] (ISOFORM 1)</scope>
    <source>
        <strain>C57BL/6J</strain>
        <tissue>Brain</tissue>
    </source>
</reference>
<reference key="3">
    <citation type="journal article" date="2005" name="Science">
        <title>The transcriptional landscape of the mammalian genome.</title>
        <authorList>
            <person name="Carninci P."/>
            <person name="Kasukawa T."/>
            <person name="Katayama S."/>
            <person name="Gough J."/>
            <person name="Frith M.C."/>
            <person name="Maeda N."/>
            <person name="Oyama R."/>
            <person name="Ravasi T."/>
            <person name="Lenhard B."/>
            <person name="Wells C."/>
            <person name="Kodzius R."/>
            <person name="Shimokawa K."/>
            <person name="Bajic V.B."/>
            <person name="Brenner S.E."/>
            <person name="Batalov S."/>
            <person name="Forrest A.R."/>
            <person name="Zavolan M."/>
            <person name="Davis M.J."/>
            <person name="Wilming L.G."/>
            <person name="Aidinis V."/>
            <person name="Allen J.E."/>
            <person name="Ambesi-Impiombato A."/>
            <person name="Apweiler R."/>
            <person name="Aturaliya R.N."/>
            <person name="Bailey T.L."/>
            <person name="Bansal M."/>
            <person name="Baxter L."/>
            <person name="Beisel K.W."/>
            <person name="Bersano T."/>
            <person name="Bono H."/>
            <person name="Chalk A.M."/>
            <person name="Chiu K.P."/>
            <person name="Choudhary V."/>
            <person name="Christoffels A."/>
            <person name="Clutterbuck D.R."/>
            <person name="Crowe M.L."/>
            <person name="Dalla E."/>
            <person name="Dalrymple B.P."/>
            <person name="de Bono B."/>
            <person name="Della Gatta G."/>
            <person name="di Bernardo D."/>
            <person name="Down T."/>
            <person name="Engstrom P."/>
            <person name="Fagiolini M."/>
            <person name="Faulkner G."/>
            <person name="Fletcher C.F."/>
            <person name="Fukushima T."/>
            <person name="Furuno M."/>
            <person name="Futaki S."/>
            <person name="Gariboldi M."/>
            <person name="Georgii-Hemming P."/>
            <person name="Gingeras T.R."/>
            <person name="Gojobori T."/>
            <person name="Green R.E."/>
            <person name="Gustincich S."/>
            <person name="Harbers M."/>
            <person name="Hayashi Y."/>
            <person name="Hensch T.K."/>
            <person name="Hirokawa N."/>
            <person name="Hill D."/>
            <person name="Huminiecki L."/>
            <person name="Iacono M."/>
            <person name="Ikeo K."/>
            <person name="Iwama A."/>
            <person name="Ishikawa T."/>
            <person name="Jakt M."/>
            <person name="Kanapin A."/>
            <person name="Katoh M."/>
            <person name="Kawasawa Y."/>
            <person name="Kelso J."/>
            <person name="Kitamura H."/>
            <person name="Kitano H."/>
            <person name="Kollias G."/>
            <person name="Krishnan S.P."/>
            <person name="Kruger A."/>
            <person name="Kummerfeld S.K."/>
            <person name="Kurochkin I.V."/>
            <person name="Lareau L.F."/>
            <person name="Lazarevic D."/>
            <person name="Lipovich L."/>
            <person name="Liu J."/>
            <person name="Liuni S."/>
            <person name="McWilliam S."/>
            <person name="Madan Babu M."/>
            <person name="Madera M."/>
            <person name="Marchionni L."/>
            <person name="Matsuda H."/>
            <person name="Matsuzawa S."/>
            <person name="Miki H."/>
            <person name="Mignone F."/>
            <person name="Miyake S."/>
            <person name="Morris K."/>
            <person name="Mottagui-Tabar S."/>
            <person name="Mulder N."/>
            <person name="Nakano N."/>
            <person name="Nakauchi H."/>
            <person name="Ng P."/>
            <person name="Nilsson R."/>
            <person name="Nishiguchi S."/>
            <person name="Nishikawa S."/>
            <person name="Nori F."/>
            <person name="Ohara O."/>
            <person name="Okazaki Y."/>
            <person name="Orlando V."/>
            <person name="Pang K.C."/>
            <person name="Pavan W.J."/>
            <person name="Pavesi G."/>
            <person name="Pesole G."/>
            <person name="Petrovsky N."/>
            <person name="Piazza S."/>
            <person name="Reed J."/>
            <person name="Reid J.F."/>
            <person name="Ring B.Z."/>
            <person name="Ringwald M."/>
            <person name="Rost B."/>
            <person name="Ruan Y."/>
            <person name="Salzberg S.L."/>
            <person name="Sandelin A."/>
            <person name="Schneider C."/>
            <person name="Schoenbach C."/>
            <person name="Sekiguchi K."/>
            <person name="Semple C.A."/>
            <person name="Seno S."/>
            <person name="Sessa L."/>
            <person name="Sheng Y."/>
            <person name="Shibata Y."/>
            <person name="Shimada H."/>
            <person name="Shimada K."/>
            <person name="Silva D."/>
            <person name="Sinclair B."/>
            <person name="Sperling S."/>
            <person name="Stupka E."/>
            <person name="Sugiura K."/>
            <person name="Sultana R."/>
            <person name="Takenaka Y."/>
            <person name="Taki K."/>
            <person name="Tammoja K."/>
            <person name="Tan S.L."/>
            <person name="Tang S."/>
            <person name="Taylor M.S."/>
            <person name="Tegner J."/>
            <person name="Teichmann S.A."/>
            <person name="Ueda H.R."/>
            <person name="van Nimwegen E."/>
            <person name="Verardo R."/>
            <person name="Wei C.L."/>
            <person name="Yagi K."/>
            <person name="Yamanishi H."/>
            <person name="Zabarovsky E."/>
            <person name="Zhu S."/>
            <person name="Zimmer A."/>
            <person name="Hide W."/>
            <person name="Bult C."/>
            <person name="Grimmond S.M."/>
            <person name="Teasdale R.D."/>
            <person name="Liu E.T."/>
            <person name="Brusic V."/>
            <person name="Quackenbush J."/>
            <person name="Wahlestedt C."/>
            <person name="Mattick J.S."/>
            <person name="Hume D.A."/>
            <person name="Kai C."/>
            <person name="Sasaki D."/>
            <person name="Tomaru Y."/>
            <person name="Fukuda S."/>
            <person name="Kanamori-Katayama M."/>
            <person name="Suzuki M."/>
            <person name="Aoki J."/>
            <person name="Arakawa T."/>
            <person name="Iida J."/>
            <person name="Imamura K."/>
            <person name="Itoh M."/>
            <person name="Kato T."/>
            <person name="Kawaji H."/>
            <person name="Kawagashira N."/>
            <person name="Kawashima T."/>
            <person name="Kojima M."/>
            <person name="Kondo S."/>
            <person name="Konno H."/>
            <person name="Nakano K."/>
            <person name="Ninomiya N."/>
            <person name="Nishio T."/>
            <person name="Okada M."/>
            <person name="Plessy C."/>
            <person name="Shibata K."/>
            <person name="Shiraki T."/>
            <person name="Suzuki S."/>
            <person name="Tagami M."/>
            <person name="Waki K."/>
            <person name="Watahiki A."/>
            <person name="Okamura-Oho Y."/>
            <person name="Suzuki H."/>
            <person name="Kawai J."/>
            <person name="Hayashizaki Y."/>
        </authorList>
    </citation>
    <scope>NUCLEOTIDE SEQUENCE [LARGE SCALE MRNA] OF 1-455 (ISOFORM 1)</scope>
    <source>
        <strain>C57BL/6J</strain>
        <tissue>Cerebellum</tissue>
        <tissue>Embryonic spinal ganglion</tissue>
    </source>
</reference>
<reference key="4">
    <citation type="submission" date="2009-01" db="UniProtKB">
        <authorList>
            <person name="Lubec G."/>
            <person name="Sunyer B."/>
            <person name="Chen W.-Q."/>
        </authorList>
    </citation>
    <scope>PROTEIN SEQUENCE OF 128-143</scope>
    <scope>IDENTIFICATION BY MASS SPECTROMETRY</scope>
    <source>
        <strain>OF1</strain>
        <tissue>Hippocampus</tissue>
    </source>
</reference>
<organism>
    <name type="scientific">Mus musculus</name>
    <name type="common">Mouse</name>
    <dbReference type="NCBI Taxonomy" id="10090"/>
    <lineage>
        <taxon>Eukaryota</taxon>
        <taxon>Metazoa</taxon>
        <taxon>Chordata</taxon>
        <taxon>Craniata</taxon>
        <taxon>Vertebrata</taxon>
        <taxon>Euteleostomi</taxon>
        <taxon>Mammalia</taxon>
        <taxon>Eutheria</taxon>
        <taxon>Euarchontoglires</taxon>
        <taxon>Glires</taxon>
        <taxon>Rodentia</taxon>
        <taxon>Myomorpha</taxon>
        <taxon>Muroidea</taxon>
        <taxon>Muridae</taxon>
        <taxon>Murinae</taxon>
        <taxon>Mus</taxon>
        <taxon>Mus</taxon>
    </lineage>
</organism>
<comment type="function">
    <text evidence="3">May catalyze the initial reaction in O-linked oligosaccharide biosynthesis, the transfer of an N-acetyl-D-galactosamine residue to a serine or threonine residue on the protein receptor.</text>
</comment>
<comment type="catalytic activity">
    <reaction evidence="3">
        <text>L-seryl-[protein] + UDP-N-acetyl-alpha-D-galactosamine = a 3-O-[N-acetyl-alpha-D-galactosaminyl]-L-seryl-[protein] + UDP + H(+)</text>
        <dbReference type="Rhea" id="RHEA:23956"/>
        <dbReference type="Rhea" id="RHEA-COMP:9863"/>
        <dbReference type="Rhea" id="RHEA-COMP:12788"/>
        <dbReference type="ChEBI" id="CHEBI:15378"/>
        <dbReference type="ChEBI" id="CHEBI:29999"/>
        <dbReference type="ChEBI" id="CHEBI:53604"/>
        <dbReference type="ChEBI" id="CHEBI:58223"/>
        <dbReference type="ChEBI" id="CHEBI:67138"/>
        <dbReference type="EC" id="2.4.1.41"/>
    </reaction>
</comment>
<comment type="catalytic activity">
    <reaction evidence="3">
        <text>L-threonyl-[protein] + UDP-N-acetyl-alpha-D-galactosamine = a 3-O-[N-acetyl-alpha-D-galactosaminyl]-L-threonyl-[protein] + UDP + H(+)</text>
        <dbReference type="Rhea" id="RHEA:52424"/>
        <dbReference type="Rhea" id="RHEA-COMP:11060"/>
        <dbReference type="Rhea" id="RHEA-COMP:11689"/>
        <dbReference type="ChEBI" id="CHEBI:15378"/>
        <dbReference type="ChEBI" id="CHEBI:30013"/>
        <dbReference type="ChEBI" id="CHEBI:58223"/>
        <dbReference type="ChEBI" id="CHEBI:67138"/>
        <dbReference type="ChEBI" id="CHEBI:87075"/>
        <dbReference type="EC" id="2.4.1.41"/>
    </reaction>
</comment>
<comment type="cofactor">
    <cofactor evidence="3">
        <name>Mn(2+)</name>
        <dbReference type="ChEBI" id="CHEBI:29035"/>
    </cofactor>
</comment>
<comment type="pathway">
    <text evidence="3">Protein modification; protein glycosylation.</text>
</comment>
<comment type="subcellular location">
    <subcellularLocation>
        <location evidence="1">Golgi apparatus membrane</location>
        <topology evidence="1">Single-pass type II membrane protein</topology>
    </subcellularLocation>
</comment>
<comment type="alternative products">
    <event type="alternative splicing"/>
    <isoform>
        <id>Q7TT15-1</id>
        <name>1</name>
        <sequence type="displayed"/>
    </isoform>
    <isoform>
        <id>Q7TT15-2</id>
        <name>2</name>
        <sequence type="described" ref="VSP_011232"/>
    </isoform>
</comment>
<comment type="domain">
    <text evidence="1">There are two conserved domains in the glycosyltransferase region: the N-terminal domain (domain A, also called GT1 motif), which is probably involved in manganese coordination and substrate binding and the C-terminal domain (domain B, also called Gal/GalNAc-T motif), which is probably involved in catalytic reaction and UDP-Gal binding.</text>
</comment>
<comment type="domain">
    <text evidence="1">The ricin B-type lectin domain binds to GalNAc and contributes to the glycopeptide specificity.</text>
</comment>
<comment type="similarity">
    <text evidence="7">Belongs to the glycosyltransferase 2 family. GalNAc-T subfamily.</text>
</comment>
<comment type="online information" name="Functional Glycomics Gateway - GTase">
    <link uri="http://www.functionalglycomics.org/glycomics/search/jsp/landing.jsp?query=gt_mou_528"/>
    <text>Putative polypeptide N-acetylgalactosaminyltransferase-like protein 3</text>
</comment>
<feature type="chain" id="PRO_0000059140" description="Polypeptide N-acetylgalactosaminyltransferase 17">
    <location>
        <begin position="1"/>
        <end position="598"/>
    </location>
</feature>
<feature type="topological domain" description="Cytoplasmic" evidence="4">
    <location>
        <begin position="1"/>
        <end position="6"/>
    </location>
</feature>
<feature type="transmembrane region" description="Helical; Signal-anchor for type II membrane protein" evidence="4">
    <location>
        <begin position="7"/>
        <end position="27"/>
    </location>
</feature>
<feature type="topological domain" description="Lumenal" evidence="4">
    <location>
        <begin position="28"/>
        <end position="598"/>
    </location>
</feature>
<feature type="domain" description="Ricin B-type lectin" evidence="5">
    <location>
        <begin position="465"/>
        <end position="594"/>
    </location>
</feature>
<feature type="region of interest" description="Catalytic subdomain A">
    <location>
        <begin position="151"/>
        <end position="262"/>
    </location>
</feature>
<feature type="region of interest" description="Catalytic subdomain B">
    <location>
        <begin position="319"/>
        <end position="381"/>
    </location>
</feature>
<feature type="binding site" evidence="1">
    <location>
        <position position="192"/>
    </location>
    <ligand>
        <name>substrate</name>
    </ligand>
</feature>
<feature type="binding site" evidence="1">
    <location>
        <position position="223"/>
    </location>
    <ligand>
        <name>substrate</name>
    </ligand>
</feature>
<feature type="binding site" evidence="1">
    <location>
        <position position="246"/>
    </location>
    <ligand>
        <name>Mn(2+)</name>
        <dbReference type="ChEBI" id="CHEBI:29035"/>
    </ligand>
</feature>
<feature type="binding site" evidence="1">
    <location>
        <position position="248"/>
    </location>
    <ligand>
        <name>Mn(2+)</name>
        <dbReference type="ChEBI" id="CHEBI:29035"/>
    </ligand>
</feature>
<feature type="binding site" evidence="1">
    <location>
        <position position="378"/>
    </location>
    <ligand>
        <name>Mn(2+)</name>
        <dbReference type="ChEBI" id="CHEBI:29035"/>
    </ligand>
</feature>
<feature type="binding site" evidence="1">
    <location>
        <position position="381"/>
    </location>
    <ligand>
        <name>substrate</name>
    </ligand>
</feature>
<feature type="binding site" evidence="1">
    <location>
        <position position="386"/>
    </location>
    <ligand>
        <name>substrate</name>
    </ligand>
</feature>
<feature type="glycosylation site" description="N-linked (GlcNAc...) asparagine" evidence="4">
    <location>
        <position position="50"/>
    </location>
</feature>
<feature type="glycosylation site" description="N-linked (GlcNAc...) asparagine" evidence="4">
    <location>
        <position position="461"/>
    </location>
</feature>
<feature type="glycosylation site" description="N-linked (GlcNAc...) asparagine" evidence="4">
    <location>
        <position position="486"/>
    </location>
</feature>
<feature type="disulfide bond" evidence="5">
    <location>
        <begin position="142"/>
        <end position="373"/>
    </location>
</feature>
<feature type="disulfide bond" evidence="5">
    <location>
        <begin position="364"/>
        <end position="443"/>
    </location>
</feature>
<feature type="disulfide bond" evidence="5">
    <location>
        <begin position="478"/>
        <end position="494"/>
    </location>
</feature>
<feature type="disulfide bond" evidence="5">
    <location>
        <begin position="526"/>
        <end position="541"/>
    </location>
</feature>
<feature type="disulfide bond" evidence="5">
    <location>
        <begin position="568"/>
        <end position="586"/>
    </location>
</feature>
<feature type="splice variant" id="VSP_011232" description="In isoform 2." evidence="6">
    <original>SDE</original>
    <variation>R</variation>
    <location>
        <begin position="194"/>
        <end position="196"/>
    </location>
</feature>
<feature type="sequence conflict" description="In Ref. 3; BAC33446." evidence="7" ref="3">
    <original>V</original>
    <variation>D</variation>
    <location>
        <position position="74"/>
    </location>
</feature>
<feature type="sequence conflict" description="In Ref. 3; BAC33446." evidence="7" ref="3">
    <original>E</original>
    <variation>D</variation>
    <location>
        <position position="224"/>
    </location>
</feature>
<feature type="sequence conflict" description="In Ref. 3; BAC33446." evidence="7" ref="3">
    <original>Q</original>
    <variation>K</variation>
    <location>
        <position position="264"/>
    </location>
</feature>